<evidence type="ECO:0000255" key="1">
    <source>
        <dbReference type="HAMAP-Rule" id="MF_00008"/>
    </source>
</evidence>
<dbReference type="EC" id="2.1.1.45" evidence="1"/>
<dbReference type="EMBL" id="CP000046">
    <property type="protein sequence ID" value="AAW36663.1"/>
    <property type="molecule type" value="Genomic_DNA"/>
</dbReference>
<dbReference type="RefSeq" id="WP_000934885.1">
    <property type="nucleotide sequence ID" value="NZ_JBGOFO010000003.1"/>
</dbReference>
<dbReference type="SMR" id="Q5HFZ6"/>
<dbReference type="KEGG" id="sac:SACOL1462"/>
<dbReference type="HOGENOM" id="CLU_021669_0_2_9"/>
<dbReference type="UniPathway" id="UPA00575"/>
<dbReference type="Proteomes" id="UP000000530">
    <property type="component" value="Chromosome"/>
</dbReference>
<dbReference type="GO" id="GO:0005829">
    <property type="term" value="C:cytosol"/>
    <property type="evidence" value="ECO:0007669"/>
    <property type="project" value="TreeGrafter"/>
</dbReference>
<dbReference type="GO" id="GO:0004799">
    <property type="term" value="F:thymidylate synthase activity"/>
    <property type="evidence" value="ECO:0007669"/>
    <property type="project" value="UniProtKB-UniRule"/>
</dbReference>
<dbReference type="GO" id="GO:0006231">
    <property type="term" value="P:dTMP biosynthetic process"/>
    <property type="evidence" value="ECO:0007669"/>
    <property type="project" value="UniProtKB-UniRule"/>
</dbReference>
<dbReference type="GO" id="GO:0006235">
    <property type="term" value="P:dTTP biosynthetic process"/>
    <property type="evidence" value="ECO:0007669"/>
    <property type="project" value="UniProtKB-UniRule"/>
</dbReference>
<dbReference type="GO" id="GO:0032259">
    <property type="term" value="P:methylation"/>
    <property type="evidence" value="ECO:0007669"/>
    <property type="project" value="UniProtKB-KW"/>
</dbReference>
<dbReference type="CDD" id="cd00351">
    <property type="entry name" value="TS_Pyrimidine_HMase"/>
    <property type="match status" value="1"/>
</dbReference>
<dbReference type="Gene3D" id="3.30.572.10">
    <property type="entry name" value="Thymidylate synthase/dCMP hydroxymethylase domain"/>
    <property type="match status" value="1"/>
</dbReference>
<dbReference type="HAMAP" id="MF_00008">
    <property type="entry name" value="Thymidy_synth_bact"/>
    <property type="match status" value="1"/>
</dbReference>
<dbReference type="InterPro" id="IPR045097">
    <property type="entry name" value="Thymidate_synth/dCMP_Mease"/>
</dbReference>
<dbReference type="InterPro" id="IPR023451">
    <property type="entry name" value="Thymidate_synth/dCMP_Mease_dom"/>
</dbReference>
<dbReference type="InterPro" id="IPR036926">
    <property type="entry name" value="Thymidate_synth/dCMP_Mease_sf"/>
</dbReference>
<dbReference type="InterPro" id="IPR000398">
    <property type="entry name" value="Thymidylate_synthase"/>
</dbReference>
<dbReference type="InterPro" id="IPR020940">
    <property type="entry name" value="Thymidylate_synthase_AS"/>
</dbReference>
<dbReference type="NCBIfam" id="NF002496">
    <property type="entry name" value="PRK01827.1-2"/>
    <property type="match status" value="1"/>
</dbReference>
<dbReference type="NCBIfam" id="TIGR03284">
    <property type="entry name" value="thym_sym"/>
    <property type="match status" value="1"/>
</dbReference>
<dbReference type="PANTHER" id="PTHR11548:SF9">
    <property type="entry name" value="THYMIDYLATE SYNTHASE"/>
    <property type="match status" value="1"/>
</dbReference>
<dbReference type="PANTHER" id="PTHR11548">
    <property type="entry name" value="THYMIDYLATE SYNTHASE 1"/>
    <property type="match status" value="1"/>
</dbReference>
<dbReference type="Pfam" id="PF00303">
    <property type="entry name" value="Thymidylat_synt"/>
    <property type="match status" value="1"/>
</dbReference>
<dbReference type="PRINTS" id="PR00108">
    <property type="entry name" value="THYMDSNTHASE"/>
</dbReference>
<dbReference type="SUPFAM" id="SSF55831">
    <property type="entry name" value="Thymidylate synthase/dCMP hydroxymethylase"/>
    <property type="match status" value="1"/>
</dbReference>
<dbReference type="PROSITE" id="PS00091">
    <property type="entry name" value="THYMIDYLATE_SYNTHASE"/>
    <property type="match status" value="1"/>
</dbReference>
<gene>
    <name evidence="1" type="primary">thyA</name>
    <name type="ordered locus">SACOL1462</name>
</gene>
<name>TYSY_STAAC</name>
<comment type="function">
    <text evidence="1">Catalyzes the reductive methylation of 2'-deoxyuridine-5'-monophosphate (dUMP) to 2'-deoxythymidine-5'-monophosphate (dTMP) while utilizing 5,10-methylenetetrahydrofolate (mTHF) as the methyl donor and reductant in the reaction, yielding dihydrofolate (DHF) as a by-product. This enzymatic reaction provides an intracellular de novo source of dTMP, an essential precursor for DNA biosynthesis.</text>
</comment>
<comment type="catalytic activity">
    <reaction evidence="1">
        <text>dUMP + (6R)-5,10-methylene-5,6,7,8-tetrahydrofolate = 7,8-dihydrofolate + dTMP</text>
        <dbReference type="Rhea" id="RHEA:12104"/>
        <dbReference type="ChEBI" id="CHEBI:15636"/>
        <dbReference type="ChEBI" id="CHEBI:57451"/>
        <dbReference type="ChEBI" id="CHEBI:63528"/>
        <dbReference type="ChEBI" id="CHEBI:246422"/>
        <dbReference type="EC" id="2.1.1.45"/>
    </reaction>
</comment>
<comment type="pathway">
    <text evidence="1">Pyrimidine metabolism; dTTP biosynthesis.</text>
</comment>
<comment type="subunit">
    <text evidence="1">Homodimer.</text>
</comment>
<comment type="subcellular location">
    <subcellularLocation>
        <location evidence="1">Cytoplasm</location>
    </subcellularLocation>
</comment>
<comment type="similarity">
    <text evidence="1">Belongs to the thymidylate synthase family. Bacterial-type ThyA subfamily.</text>
</comment>
<protein>
    <recommendedName>
        <fullName evidence="1">Thymidylate synthase</fullName>
        <shortName evidence="1">TS</shortName>
        <shortName evidence="1">TSase</shortName>
        <ecNumber evidence="1">2.1.1.45</ecNumber>
    </recommendedName>
</protein>
<reference key="1">
    <citation type="journal article" date="2005" name="J. Bacteriol.">
        <title>Insights on evolution of virulence and resistance from the complete genome analysis of an early methicillin-resistant Staphylococcus aureus strain and a biofilm-producing methicillin-resistant Staphylococcus epidermidis strain.</title>
        <authorList>
            <person name="Gill S.R."/>
            <person name="Fouts D.E."/>
            <person name="Archer G.L."/>
            <person name="Mongodin E.F."/>
            <person name="DeBoy R.T."/>
            <person name="Ravel J."/>
            <person name="Paulsen I.T."/>
            <person name="Kolonay J.F."/>
            <person name="Brinkac L.M."/>
            <person name="Beanan M.J."/>
            <person name="Dodson R.J."/>
            <person name="Daugherty S.C."/>
            <person name="Madupu R."/>
            <person name="Angiuoli S.V."/>
            <person name="Durkin A.S."/>
            <person name="Haft D.H."/>
            <person name="Vamathevan J.J."/>
            <person name="Khouri H."/>
            <person name="Utterback T.R."/>
            <person name="Lee C."/>
            <person name="Dimitrov G."/>
            <person name="Jiang L."/>
            <person name="Qin H."/>
            <person name="Weidman J."/>
            <person name="Tran K."/>
            <person name="Kang K.H."/>
            <person name="Hance I.R."/>
            <person name="Nelson K.E."/>
            <person name="Fraser C.M."/>
        </authorList>
    </citation>
    <scope>NUCLEOTIDE SEQUENCE [LARGE SCALE GENOMIC DNA]</scope>
    <source>
        <strain>COL</strain>
    </source>
</reference>
<feature type="chain" id="PRO_0000141017" description="Thymidylate synthase">
    <location>
        <begin position="1"/>
        <end position="318"/>
    </location>
</feature>
<feature type="active site" description="Nucleophile" evidence="1">
    <location>
        <position position="201"/>
    </location>
</feature>
<feature type="binding site" description="in other chain" evidence="1">
    <location>
        <position position="26"/>
    </location>
    <ligand>
        <name>dUMP</name>
        <dbReference type="ChEBI" id="CHEBI:246422"/>
        <note>ligand shared between dimeric partners</note>
    </ligand>
</feature>
<feature type="binding site" evidence="1">
    <location>
        <begin position="181"/>
        <end position="182"/>
    </location>
    <ligand>
        <name>dUMP</name>
        <dbReference type="ChEBI" id="CHEBI:246422"/>
        <note>ligand shared between dimeric partners</note>
    </ligand>
</feature>
<feature type="binding site" description="in other chain" evidence="1">
    <location>
        <begin position="221"/>
        <end position="224"/>
    </location>
    <ligand>
        <name>dUMP</name>
        <dbReference type="ChEBI" id="CHEBI:246422"/>
        <note>ligand shared between dimeric partners</note>
    </ligand>
</feature>
<feature type="binding site" evidence="1">
    <location>
        <position position="224"/>
    </location>
    <ligand>
        <name>(6R)-5,10-methylene-5,6,7,8-tetrahydrofolate</name>
        <dbReference type="ChEBI" id="CHEBI:15636"/>
    </ligand>
</feature>
<feature type="binding site" description="in other chain" evidence="1">
    <location>
        <position position="232"/>
    </location>
    <ligand>
        <name>dUMP</name>
        <dbReference type="ChEBI" id="CHEBI:246422"/>
        <note>ligand shared between dimeric partners</note>
    </ligand>
</feature>
<feature type="binding site" description="in other chain" evidence="1">
    <location>
        <begin position="262"/>
        <end position="264"/>
    </location>
    <ligand>
        <name>dUMP</name>
        <dbReference type="ChEBI" id="CHEBI:246422"/>
        <note>ligand shared between dimeric partners</note>
    </ligand>
</feature>
<feature type="binding site" evidence="1">
    <location>
        <position position="317"/>
    </location>
    <ligand>
        <name>(6R)-5,10-methylene-5,6,7,8-tetrahydrofolate</name>
        <dbReference type="ChEBI" id="CHEBI:15636"/>
    </ligand>
</feature>
<organism>
    <name type="scientific">Staphylococcus aureus (strain COL)</name>
    <dbReference type="NCBI Taxonomy" id="93062"/>
    <lineage>
        <taxon>Bacteria</taxon>
        <taxon>Bacillati</taxon>
        <taxon>Bacillota</taxon>
        <taxon>Bacilli</taxon>
        <taxon>Bacillales</taxon>
        <taxon>Staphylococcaceae</taxon>
        <taxon>Staphylococcus</taxon>
    </lineage>
</organism>
<accession>Q5HFZ6</accession>
<keyword id="KW-0963">Cytoplasm</keyword>
<keyword id="KW-0489">Methyltransferase</keyword>
<keyword id="KW-0545">Nucleotide biosynthesis</keyword>
<keyword id="KW-0808">Transferase</keyword>
<proteinExistence type="inferred from homology"/>
<sequence>MLNSFDAAYHSLCEEVLEIGNTRNDRTNTGTISKFGHQLRFDLSKGFPLLTTKKVSFKLVATELLWFIKGDTNIQYLLKYNNNIWNEWAFENYIKSDEYKGPDMTDFGHRALSDPEFNEQYKEQMKQFKQRILEDDTFAKQFGDLGNVYGKQWRDWVDKDGNHFDQLKTVIEQIKHNPDSRRHIVSAWNPTEIDTMALPPCHTMFQFYVQDGKLSCQLYQRSADIFLGVPFNIASYALLTHLIAKECGLEVGEFVHTFGDAHIYSNHIDAIQTQLARESFNPPTLKINSDKSIFDINYEDLEIVDYESHPAIKAPIAV</sequence>